<name>BBS4_XENTR</name>
<keyword id="KW-1003">Cell membrane</keyword>
<keyword id="KW-0966">Cell projection</keyword>
<keyword id="KW-0969">Cilium</keyword>
<keyword id="KW-0963">Cytoplasm</keyword>
<keyword id="KW-0206">Cytoskeleton</keyword>
<keyword id="KW-0472">Membrane</keyword>
<keyword id="KW-1185">Reference proteome</keyword>
<keyword id="KW-0677">Repeat</keyword>
<keyword id="KW-0802">TPR repeat</keyword>
<protein>
    <recommendedName>
        <fullName evidence="4">BBSome complex member BBS4</fullName>
    </recommendedName>
    <alternativeName>
        <fullName>Bardet-Biedl syndrome 4 protein homolog</fullName>
    </alternativeName>
</protein>
<organism>
    <name type="scientific">Xenopus tropicalis</name>
    <name type="common">Western clawed frog</name>
    <name type="synonym">Silurana tropicalis</name>
    <dbReference type="NCBI Taxonomy" id="8364"/>
    <lineage>
        <taxon>Eukaryota</taxon>
        <taxon>Metazoa</taxon>
        <taxon>Chordata</taxon>
        <taxon>Craniata</taxon>
        <taxon>Vertebrata</taxon>
        <taxon>Euteleostomi</taxon>
        <taxon>Amphibia</taxon>
        <taxon>Batrachia</taxon>
        <taxon>Anura</taxon>
        <taxon>Pipoidea</taxon>
        <taxon>Pipidae</taxon>
        <taxon>Xenopodinae</taxon>
        <taxon>Xenopus</taxon>
        <taxon>Silurana</taxon>
    </lineage>
</organism>
<accession>Q28G25</accession>
<dbReference type="EMBL" id="CR761609">
    <property type="protein sequence ID" value="CAJ83807.1"/>
    <property type="molecule type" value="mRNA"/>
</dbReference>
<dbReference type="RefSeq" id="NP_001016280.1">
    <property type="nucleotide sequence ID" value="NM_001016280.2"/>
</dbReference>
<dbReference type="RefSeq" id="XP_031753789.1">
    <property type="nucleotide sequence ID" value="XM_031897929.1"/>
</dbReference>
<dbReference type="SMR" id="Q28G25"/>
<dbReference type="FunCoup" id="Q28G25">
    <property type="interactions" value="669"/>
</dbReference>
<dbReference type="STRING" id="8364.ENSXETP00000053088"/>
<dbReference type="PaxDb" id="8364-ENSXETP00000058635"/>
<dbReference type="GeneID" id="549034"/>
<dbReference type="KEGG" id="xtr:549034"/>
<dbReference type="AGR" id="Xenbase:XB-GENE-952107"/>
<dbReference type="CTD" id="585"/>
<dbReference type="Xenbase" id="XB-GENE-952107">
    <property type="gene designation" value="bbs4"/>
</dbReference>
<dbReference type="eggNOG" id="KOG1124">
    <property type="taxonomic scope" value="Eukaryota"/>
</dbReference>
<dbReference type="HOGENOM" id="CLU_033477_0_0_1"/>
<dbReference type="InParanoid" id="Q28G25"/>
<dbReference type="OMA" id="YCEVAWH"/>
<dbReference type="OrthoDB" id="309339at2759"/>
<dbReference type="Proteomes" id="UP000008143">
    <property type="component" value="Chromosome 3"/>
</dbReference>
<dbReference type="GO" id="GO:0034451">
    <property type="term" value="C:centriolar satellite"/>
    <property type="evidence" value="ECO:0000250"/>
    <property type="project" value="UniProtKB"/>
</dbReference>
<dbReference type="GO" id="GO:0005813">
    <property type="term" value="C:centrosome"/>
    <property type="evidence" value="ECO:0000250"/>
    <property type="project" value="UniProtKB"/>
</dbReference>
<dbReference type="GO" id="GO:0060170">
    <property type="term" value="C:ciliary membrane"/>
    <property type="evidence" value="ECO:0007669"/>
    <property type="project" value="UniProtKB-SubCell"/>
</dbReference>
<dbReference type="GO" id="GO:0005929">
    <property type="term" value="C:cilium"/>
    <property type="evidence" value="ECO:0000250"/>
    <property type="project" value="UniProtKB"/>
</dbReference>
<dbReference type="GO" id="GO:0005737">
    <property type="term" value="C:cytoplasm"/>
    <property type="evidence" value="ECO:0007669"/>
    <property type="project" value="UniProtKB-KW"/>
</dbReference>
<dbReference type="GO" id="GO:0000242">
    <property type="term" value="C:pericentriolar material"/>
    <property type="evidence" value="ECO:0000250"/>
    <property type="project" value="UniProtKB"/>
</dbReference>
<dbReference type="GO" id="GO:0030674">
    <property type="term" value="F:protein-macromolecule adaptor activity"/>
    <property type="evidence" value="ECO:0000250"/>
    <property type="project" value="UniProtKB"/>
</dbReference>
<dbReference type="GO" id="GO:0007098">
    <property type="term" value="P:centrosome cycle"/>
    <property type="evidence" value="ECO:0000250"/>
    <property type="project" value="UniProtKB"/>
</dbReference>
<dbReference type="FunFam" id="1.25.40.10:FF:000237">
    <property type="entry name" value="Bardet-Biedl syndrome 4 (Human)"/>
    <property type="match status" value="1"/>
</dbReference>
<dbReference type="FunFam" id="1.25.40.10:FF:000265">
    <property type="entry name" value="Bardet-Biedl syndrome 4 (Human)"/>
    <property type="match status" value="1"/>
</dbReference>
<dbReference type="Gene3D" id="1.25.40.10">
    <property type="entry name" value="Tetratricopeptide repeat domain"/>
    <property type="match status" value="3"/>
</dbReference>
<dbReference type="InterPro" id="IPR011990">
    <property type="entry name" value="TPR-like_helical_dom_sf"/>
</dbReference>
<dbReference type="InterPro" id="IPR019734">
    <property type="entry name" value="TPR_rpt"/>
</dbReference>
<dbReference type="PANTHER" id="PTHR44186">
    <property type="match status" value="1"/>
</dbReference>
<dbReference type="PANTHER" id="PTHR44186:SF1">
    <property type="entry name" value="BARDET-BIEDL SYNDROME 4 PROTEIN"/>
    <property type="match status" value="1"/>
</dbReference>
<dbReference type="Pfam" id="PF13432">
    <property type="entry name" value="TPR_16"/>
    <property type="match status" value="1"/>
</dbReference>
<dbReference type="Pfam" id="PF14559">
    <property type="entry name" value="TPR_19"/>
    <property type="match status" value="1"/>
</dbReference>
<dbReference type="Pfam" id="PF13181">
    <property type="entry name" value="TPR_8"/>
    <property type="match status" value="3"/>
</dbReference>
<dbReference type="SMART" id="SM00028">
    <property type="entry name" value="TPR"/>
    <property type="match status" value="8"/>
</dbReference>
<dbReference type="SUPFAM" id="SSF48452">
    <property type="entry name" value="TPR-like"/>
    <property type="match status" value="1"/>
</dbReference>
<dbReference type="PROSITE" id="PS50005">
    <property type="entry name" value="TPR"/>
    <property type="match status" value="8"/>
</dbReference>
<dbReference type="PROSITE" id="PS50293">
    <property type="entry name" value="TPR_REGION"/>
    <property type="match status" value="1"/>
</dbReference>
<feature type="chain" id="PRO_0000284043" description="BBSome complex member BBS4">
    <location>
        <begin position="1"/>
        <end position="516"/>
    </location>
</feature>
<feature type="repeat" description="TPR 1">
    <location>
        <begin position="64"/>
        <end position="97"/>
    </location>
</feature>
<feature type="repeat" description="TPR 2">
    <location>
        <begin position="98"/>
        <end position="131"/>
    </location>
</feature>
<feature type="repeat" description="TPR 3">
    <location>
        <begin position="133"/>
        <end position="165"/>
    </location>
</feature>
<feature type="repeat" description="TPR 4">
    <location>
        <begin position="166"/>
        <end position="198"/>
    </location>
</feature>
<feature type="repeat" description="TPR 5">
    <location>
        <begin position="200"/>
        <end position="232"/>
    </location>
</feature>
<feature type="repeat" description="TPR 6">
    <location>
        <begin position="234"/>
        <end position="266"/>
    </location>
</feature>
<feature type="repeat" description="TPR 7">
    <location>
        <begin position="267"/>
        <end position="300"/>
    </location>
</feature>
<feature type="repeat" description="TPR 8">
    <location>
        <begin position="302"/>
        <end position="334"/>
    </location>
</feature>
<feature type="repeat" description="TPR 9">
    <location>
        <begin position="336"/>
        <end position="368"/>
    </location>
</feature>
<feature type="repeat" description="TPR 10">
    <location>
        <begin position="370"/>
        <end position="402"/>
    </location>
</feature>
<feature type="region of interest" description="Disordered" evidence="3">
    <location>
        <begin position="431"/>
        <end position="516"/>
    </location>
</feature>
<feature type="compositionally biased region" description="Polar residues" evidence="3">
    <location>
        <begin position="477"/>
        <end position="490"/>
    </location>
</feature>
<feature type="compositionally biased region" description="Low complexity" evidence="3">
    <location>
        <begin position="492"/>
        <end position="506"/>
    </location>
</feature>
<proteinExistence type="evidence at transcript level"/>
<sequence>MAEEQQEVVPQESGLRKSRVQKVPELPILERRNWLIHLHYVRKDYESCKAVIKEQLQATQGVCEYAVYVQALILRLEGKIQESLELFQTCAVLNPTSSDNLKQVARSLFLLGKHKAAVEVYNEAARLNQKDWEICHNLGVCYLFLKDLSKSKEQLTLALQLHRQDLSAITLGKIQLQEGDIDGAIQTFTQALQLSPENTELLTTLGLLYLQNGLFQKAFEYLGNALTYDPSNYKGILAAGCMMQSHGDYDVALSKYRVAASSVPESSPLWNNIGMCFYGKKKYVAAISCLKRALYLSPFDWRVLYNLGLVHLSMQQYASAFHFLSAAISLHHGNAGLYMLLAVALTYLDDIENAKSSYQQAASLDQTDPLVNLNFAVLLYNQGDKKGALGQYQELERKVSALRETSTEFDPEMVDMAQKLGAALQVGESLVWTRQTKDPKGKQRGAGKGPGAEQAPLGSNQALGRAMSSAAGYSKASGLSSGITISTVSKHPSLPLEPEDPSLTSSTAPDYRRGHS</sequence>
<comment type="function">
    <text evidence="1">May be required for the dynein-mediated transport of pericentriolar proteins to the centrosome. Required for microtubule anchoring at the centrosome but not for microtubule nucleation. Required for ciliogenesis (By similarity).</text>
</comment>
<comment type="subunit">
    <text evidence="2">Part of BBSome complex.</text>
</comment>
<comment type="subcellular location">
    <subcellularLocation>
        <location evidence="1">Cytoplasm</location>
        <location evidence="1">Cytoskeleton</location>
        <location evidence="1">Microtubule organizing center</location>
        <location evidence="1">Centrosome</location>
    </subcellularLocation>
    <subcellularLocation>
        <location evidence="1">Cytoplasm</location>
        <location evidence="1">Cytoskeleton</location>
    </subcellularLocation>
    <subcellularLocation>
        <location evidence="1">Cell projection</location>
        <location evidence="1">Cilium membrane</location>
    </subcellularLocation>
    <subcellularLocation>
        <location evidence="1">Cytoplasm</location>
        <location evidence="1">Cytoskeleton</location>
        <location evidence="1">Microtubule organizing center</location>
        <location evidence="1">Centrosome</location>
        <location evidence="1">Centriolar satellite</location>
    </subcellularLocation>
</comment>
<comment type="similarity">
    <text evidence="4">Belongs to the BBS4 family.</text>
</comment>
<gene>
    <name type="primary">bbs4</name>
    <name type="ORF">TGas038l03.1</name>
</gene>
<evidence type="ECO:0000250" key="1"/>
<evidence type="ECO:0000250" key="2">
    <source>
        <dbReference type="UniProtKB" id="Q96RK4"/>
    </source>
</evidence>
<evidence type="ECO:0000256" key="3">
    <source>
        <dbReference type="SAM" id="MobiDB-lite"/>
    </source>
</evidence>
<evidence type="ECO:0000305" key="4"/>
<reference key="1">
    <citation type="submission" date="2006-10" db="EMBL/GenBank/DDBJ databases">
        <authorList>
            <consortium name="Sanger Xenopus tropicalis EST/cDNA project"/>
        </authorList>
    </citation>
    <scope>NUCLEOTIDE SEQUENCE [LARGE SCALE MRNA]</scope>
    <source>
        <tissue>Gastrula</tissue>
    </source>
</reference>